<evidence type="ECO:0000255" key="1">
    <source>
        <dbReference type="HAMAP-Rule" id="MF_00736"/>
    </source>
</evidence>
<evidence type="ECO:0000305" key="2"/>
<dbReference type="EMBL" id="CP000439">
    <property type="protein sequence ID" value="ABK90436.1"/>
    <property type="molecule type" value="Genomic_DNA"/>
</dbReference>
<dbReference type="RefSeq" id="WP_003024803.1">
    <property type="nucleotide sequence ID" value="NZ_CP009633.1"/>
</dbReference>
<dbReference type="SMR" id="A0Q871"/>
<dbReference type="GeneID" id="75264696"/>
<dbReference type="KEGG" id="ftn:FTN_1572"/>
<dbReference type="KEGG" id="ftx:AW25_426"/>
<dbReference type="BioCyc" id="FTUL401614:G1G75-1624-MONOMER"/>
<dbReference type="Proteomes" id="UP000000762">
    <property type="component" value="Chromosome"/>
</dbReference>
<dbReference type="GO" id="GO:0022625">
    <property type="term" value="C:cytosolic large ribosomal subunit"/>
    <property type="evidence" value="ECO:0007669"/>
    <property type="project" value="TreeGrafter"/>
</dbReference>
<dbReference type="GO" id="GO:0070180">
    <property type="term" value="F:large ribosomal subunit rRNA binding"/>
    <property type="evidence" value="ECO:0007669"/>
    <property type="project" value="UniProtKB-UniRule"/>
</dbReference>
<dbReference type="GO" id="GO:0003735">
    <property type="term" value="F:structural constituent of ribosome"/>
    <property type="evidence" value="ECO:0007669"/>
    <property type="project" value="InterPro"/>
</dbReference>
<dbReference type="GO" id="GO:0006412">
    <property type="term" value="P:translation"/>
    <property type="evidence" value="ECO:0007669"/>
    <property type="project" value="UniProtKB-UniRule"/>
</dbReference>
<dbReference type="CDD" id="cd00349">
    <property type="entry name" value="Ribosomal_L11"/>
    <property type="match status" value="1"/>
</dbReference>
<dbReference type="FunFam" id="1.10.10.250:FF:000001">
    <property type="entry name" value="50S ribosomal protein L11"/>
    <property type="match status" value="1"/>
</dbReference>
<dbReference type="FunFam" id="3.30.1550.10:FF:000001">
    <property type="entry name" value="50S ribosomal protein L11"/>
    <property type="match status" value="1"/>
</dbReference>
<dbReference type="Gene3D" id="1.10.10.250">
    <property type="entry name" value="Ribosomal protein L11, C-terminal domain"/>
    <property type="match status" value="1"/>
</dbReference>
<dbReference type="Gene3D" id="3.30.1550.10">
    <property type="entry name" value="Ribosomal protein L11/L12, N-terminal domain"/>
    <property type="match status" value="1"/>
</dbReference>
<dbReference type="HAMAP" id="MF_00736">
    <property type="entry name" value="Ribosomal_uL11"/>
    <property type="match status" value="1"/>
</dbReference>
<dbReference type="InterPro" id="IPR000911">
    <property type="entry name" value="Ribosomal_uL11"/>
</dbReference>
<dbReference type="InterPro" id="IPR006519">
    <property type="entry name" value="Ribosomal_uL11_bac-typ"/>
</dbReference>
<dbReference type="InterPro" id="IPR020783">
    <property type="entry name" value="Ribosomal_uL11_C"/>
</dbReference>
<dbReference type="InterPro" id="IPR036769">
    <property type="entry name" value="Ribosomal_uL11_C_sf"/>
</dbReference>
<dbReference type="InterPro" id="IPR020785">
    <property type="entry name" value="Ribosomal_uL11_CS"/>
</dbReference>
<dbReference type="InterPro" id="IPR020784">
    <property type="entry name" value="Ribosomal_uL11_N"/>
</dbReference>
<dbReference type="InterPro" id="IPR036796">
    <property type="entry name" value="Ribosomal_uL11_N_sf"/>
</dbReference>
<dbReference type="NCBIfam" id="TIGR01632">
    <property type="entry name" value="L11_bact"/>
    <property type="match status" value="1"/>
</dbReference>
<dbReference type="PANTHER" id="PTHR11661">
    <property type="entry name" value="60S RIBOSOMAL PROTEIN L12"/>
    <property type="match status" value="1"/>
</dbReference>
<dbReference type="PANTHER" id="PTHR11661:SF1">
    <property type="entry name" value="LARGE RIBOSOMAL SUBUNIT PROTEIN UL11M"/>
    <property type="match status" value="1"/>
</dbReference>
<dbReference type="Pfam" id="PF00298">
    <property type="entry name" value="Ribosomal_L11"/>
    <property type="match status" value="1"/>
</dbReference>
<dbReference type="Pfam" id="PF03946">
    <property type="entry name" value="Ribosomal_L11_N"/>
    <property type="match status" value="1"/>
</dbReference>
<dbReference type="SMART" id="SM00649">
    <property type="entry name" value="RL11"/>
    <property type="match status" value="1"/>
</dbReference>
<dbReference type="SUPFAM" id="SSF54747">
    <property type="entry name" value="Ribosomal L11/L12e N-terminal domain"/>
    <property type="match status" value="1"/>
</dbReference>
<dbReference type="SUPFAM" id="SSF46906">
    <property type="entry name" value="Ribosomal protein L11, C-terminal domain"/>
    <property type="match status" value="1"/>
</dbReference>
<dbReference type="PROSITE" id="PS00359">
    <property type="entry name" value="RIBOSOMAL_L11"/>
    <property type="match status" value="1"/>
</dbReference>
<name>RL11_FRATN</name>
<gene>
    <name evidence="1" type="primary">rplK</name>
    <name type="ordered locus">FTN_1572</name>
</gene>
<protein>
    <recommendedName>
        <fullName evidence="1">Large ribosomal subunit protein uL11</fullName>
    </recommendedName>
    <alternativeName>
        <fullName evidence="2">50S ribosomal protein L11</fullName>
    </alternativeName>
</protein>
<keyword id="KW-0488">Methylation</keyword>
<keyword id="KW-0687">Ribonucleoprotein</keyword>
<keyword id="KW-0689">Ribosomal protein</keyword>
<keyword id="KW-0694">RNA-binding</keyword>
<keyword id="KW-0699">rRNA-binding</keyword>
<feature type="chain" id="PRO_1000046180" description="Large ribosomal subunit protein uL11">
    <location>
        <begin position="1"/>
        <end position="144"/>
    </location>
</feature>
<sequence>MAKKKIEAIIKLQVAAGKANPSPPIGPALGQHGVNIMGFCKEFNAKTQGMEPGMPIPVEISVYSDRSFTFEMKTPPASYLIKKAINVKSGSSKPSKEFVGTITRAQLEEIAKVKDPDLTAADLDAAVRIIAGSARSMGVKVEGV</sequence>
<accession>A0Q871</accession>
<reference key="1">
    <citation type="journal article" date="2007" name="Genome Biol.">
        <title>Comparison of Francisella tularensis genomes reveals evolutionary events associated with the emergence of human pathogenic strains.</title>
        <authorList>
            <person name="Rohmer L."/>
            <person name="Fong C."/>
            <person name="Abmayr S."/>
            <person name="Wasnick M."/>
            <person name="Larson Freeman T.J."/>
            <person name="Radey M."/>
            <person name="Guina T."/>
            <person name="Svensson K."/>
            <person name="Hayden H.S."/>
            <person name="Jacobs M."/>
            <person name="Gallagher L.A."/>
            <person name="Manoil C."/>
            <person name="Ernst R.K."/>
            <person name="Drees B."/>
            <person name="Buckley D."/>
            <person name="Haugen E."/>
            <person name="Bovee D."/>
            <person name="Zhou Y."/>
            <person name="Chang J."/>
            <person name="Levy R."/>
            <person name="Lim R."/>
            <person name="Gillett W."/>
            <person name="Guenthener D."/>
            <person name="Kang A."/>
            <person name="Shaffer S.A."/>
            <person name="Taylor G."/>
            <person name="Chen J."/>
            <person name="Gallis B."/>
            <person name="D'Argenio D.A."/>
            <person name="Forsman M."/>
            <person name="Olson M.V."/>
            <person name="Goodlett D.R."/>
            <person name="Kaul R."/>
            <person name="Miller S.I."/>
            <person name="Brittnacher M.J."/>
        </authorList>
    </citation>
    <scope>NUCLEOTIDE SEQUENCE [LARGE SCALE GENOMIC DNA]</scope>
    <source>
        <strain>U112</strain>
    </source>
</reference>
<proteinExistence type="inferred from homology"/>
<organism>
    <name type="scientific">Francisella tularensis subsp. novicida (strain U112)</name>
    <dbReference type="NCBI Taxonomy" id="401614"/>
    <lineage>
        <taxon>Bacteria</taxon>
        <taxon>Pseudomonadati</taxon>
        <taxon>Pseudomonadota</taxon>
        <taxon>Gammaproteobacteria</taxon>
        <taxon>Thiotrichales</taxon>
        <taxon>Francisellaceae</taxon>
        <taxon>Francisella</taxon>
    </lineage>
</organism>
<comment type="function">
    <text evidence="1">Forms part of the ribosomal stalk which helps the ribosome interact with GTP-bound translation factors.</text>
</comment>
<comment type="subunit">
    <text evidence="1">Part of the ribosomal stalk of the 50S ribosomal subunit. Interacts with L10 and the large rRNA to form the base of the stalk. L10 forms an elongated spine to which L12 dimers bind in a sequential fashion forming a multimeric L10(L12)X complex.</text>
</comment>
<comment type="PTM">
    <text evidence="1">One or more lysine residues are methylated.</text>
</comment>
<comment type="similarity">
    <text evidence="1">Belongs to the universal ribosomal protein uL11 family.</text>
</comment>